<evidence type="ECO:0000255" key="1">
    <source>
        <dbReference type="HAMAP-Rule" id="MF_00444"/>
    </source>
</evidence>
<dbReference type="EC" id="3.4.21.92" evidence="1"/>
<dbReference type="EMBL" id="CR767821">
    <property type="protein sequence ID" value="CAH57918.1"/>
    <property type="molecule type" value="Genomic_DNA"/>
</dbReference>
<dbReference type="EMBL" id="CR925678">
    <property type="protein sequence ID" value="CAI26696.1"/>
    <property type="molecule type" value="Genomic_DNA"/>
</dbReference>
<dbReference type="RefSeq" id="WP_011154886.1">
    <property type="nucleotide sequence ID" value="NC_005295.2"/>
</dbReference>
<dbReference type="SMR" id="Q5HBX5"/>
<dbReference type="MEROPS" id="S14.001"/>
<dbReference type="GeneID" id="33057727"/>
<dbReference type="KEGG" id="eru:Erum2000"/>
<dbReference type="KEGG" id="erw:ERWE_CDS_02020"/>
<dbReference type="eggNOG" id="COG0740">
    <property type="taxonomic scope" value="Bacteria"/>
</dbReference>
<dbReference type="HOGENOM" id="CLU_058707_3_3_5"/>
<dbReference type="Proteomes" id="UP000001021">
    <property type="component" value="Chromosome"/>
</dbReference>
<dbReference type="GO" id="GO:0005737">
    <property type="term" value="C:cytoplasm"/>
    <property type="evidence" value="ECO:0007669"/>
    <property type="project" value="UniProtKB-SubCell"/>
</dbReference>
<dbReference type="GO" id="GO:0009368">
    <property type="term" value="C:endopeptidase Clp complex"/>
    <property type="evidence" value="ECO:0007669"/>
    <property type="project" value="TreeGrafter"/>
</dbReference>
<dbReference type="GO" id="GO:0004176">
    <property type="term" value="F:ATP-dependent peptidase activity"/>
    <property type="evidence" value="ECO:0007669"/>
    <property type="project" value="InterPro"/>
</dbReference>
<dbReference type="GO" id="GO:0051117">
    <property type="term" value="F:ATPase binding"/>
    <property type="evidence" value="ECO:0007669"/>
    <property type="project" value="TreeGrafter"/>
</dbReference>
<dbReference type="GO" id="GO:0004252">
    <property type="term" value="F:serine-type endopeptidase activity"/>
    <property type="evidence" value="ECO:0007669"/>
    <property type="project" value="UniProtKB-UniRule"/>
</dbReference>
<dbReference type="GO" id="GO:0006515">
    <property type="term" value="P:protein quality control for misfolded or incompletely synthesized proteins"/>
    <property type="evidence" value="ECO:0007669"/>
    <property type="project" value="TreeGrafter"/>
</dbReference>
<dbReference type="CDD" id="cd07017">
    <property type="entry name" value="S14_ClpP_2"/>
    <property type="match status" value="1"/>
</dbReference>
<dbReference type="FunFam" id="3.90.226.10:FF:000001">
    <property type="entry name" value="ATP-dependent Clp protease proteolytic subunit"/>
    <property type="match status" value="1"/>
</dbReference>
<dbReference type="Gene3D" id="3.90.226.10">
    <property type="entry name" value="2-enoyl-CoA Hydratase, Chain A, domain 1"/>
    <property type="match status" value="1"/>
</dbReference>
<dbReference type="HAMAP" id="MF_00444">
    <property type="entry name" value="ClpP"/>
    <property type="match status" value="1"/>
</dbReference>
<dbReference type="InterPro" id="IPR001907">
    <property type="entry name" value="ClpP"/>
</dbReference>
<dbReference type="InterPro" id="IPR029045">
    <property type="entry name" value="ClpP/crotonase-like_dom_sf"/>
</dbReference>
<dbReference type="InterPro" id="IPR023562">
    <property type="entry name" value="ClpP/TepA"/>
</dbReference>
<dbReference type="InterPro" id="IPR033135">
    <property type="entry name" value="ClpP_His_AS"/>
</dbReference>
<dbReference type="InterPro" id="IPR018215">
    <property type="entry name" value="ClpP_Ser_AS"/>
</dbReference>
<dbReference type="NCBIfam" id="TIGR00493">
    <property type="entry name" value="clpP"/>
    <property type="match status" value="1"/>
</dbReference>
<dbReference type="NCBIfam" id="NF001368">
    <property type="entry name" value="PRK00277.1"/>
    <property type="match status" value="1"/>
</dbReference>
<dbReference type="NCBIfam" id="NF009205">
    <property type="entry name" value="PRK12553.1"/>
    <property type="match status" value="1"/>
</dbReference>
<dbReference type="PANTHER" id="PTHR10381">
    <property type="entry name" value="ATP-DEPENDENT CLP PROTEASE PROTEOLYTIC SUBUNIT"/>
    <property type="match status" value="1"/>
</dbReference>
<dbReference type="PANTHER" id="PTHR10381:SF70">
    <property type="entry name" value="ATP-DEPENDENT CLP PROTEASE PROTEOLYTIC SUBUNIT"/>
    <property type="match status" value="1"/>
</dbReference>
<dbReference type="Pfam" id="PF00574">
    <property type="entry name" value="CLP_protease"/>
    <property type="match status" value="1"/>
</dbReference>
<dbReference type="PRINTS" id="PR00127">
    <property type="entry name" value="CLPPROTEASEP"/>
</dbReference>
<dbReference type="SUPFAM" id="SSF52096">
    <property type="entry name" value="ClpP/crotonase"/>
    <property type="match status" value="1"/>
</dbReference>
<dbReference type="PROSITE" id="PS00382">
    <property type="entry name" value="CLP_PROTEASE_HIS"/>
    <property type="match status" value="1"/>
</dbReference>
<dbReference type="PROSITE" id="PS00381">
    <property type="entry name" value="CLP_PROTEASE_SER"/>
    <property type="match status" value="1"/>
</dbReference>
<reference key="1">
    <citation type="journal article" date="2005" name="Proc. Natl. Acad. Sci. U.S.A.">
        <title>The genome of the heartwater agent Ehrlichia ruminantium contains multiple tandem repeats of actively variable copy number.</title>
        <authorList>
            <person name="Collins N.E."/>
            <person name="Liebenberg J."/>
            <person name="de Villiers E.P."/>
            <person name="Brayton K.A."/>
            <person name="Louw E."/>
            <person name="Pretorius A."/>
            <person name="Faber F.E."/>
            <person name="van Heerden H."/>
            <person name="Josemans A."/>
            <person name="van Kleef M."/>
            <person name="Steyn H.C."/>
            <person name="van Strijp M.F."/>
            <person name="Zweygarth E."/>
            <person name="Jongejan F."/>
            <person name="Maillard J.C."/>
            <person name="Berthier D."/>
            <person name="Botha M."/>
            <person name="Joubert F."/>
            <person name="Corton C.H."/>
            <person name="Thomson N.R."/>
            <person name="Allsopp M.T."/>
            <person name="Allsopp B.A."/>
        </authorList>
    </citation>
    <scope>NUCLEOTIDE SEQUENCE [LARGE SCALE GENOMIC DNA]</scope>
    <source>
        <strain>Welgevonden</strain>
    </source>
</reference>
<reference key="2">
    <citation type="journal article" date="2006" name="J. Bacteriol.">
        <title>Comparative genomic analysis of three strains of Ehrlichia ruminantium reveals an active process of genome size plasticity.</title>
        <authorList>
            <person name="Frutos R."/>
            <person name="Viari A."/>
            <person name="Ferraz C."/>
            <person name="Morgat A."/>
            <person name="Eychenie S."/>
            <person name="Kandassamy Y."/>
            <person name="Chantal I."/>
            <person name="Bensaid A."/>
            <person name="Coissac E."/>
            <person name="Vachiery N."/>
            <person name="Demaille J."/>
            <person name="Martinez D."/>
        </authorList>
    </citation>
    <scope>NUCLEOTIDE SEQUENCE [LARGE SCALE GENOMIC DNA]</scope>
    <source>
        <strain>Welgevonden</strain>
    </source>
</reference>
<proteinExistence type="inferred from homology"/>
<sequence>MTLVPMVVEQTSRGERAYDIYSRLLKERIIFITGPIEDQMASLVVAQLIFLEAENPEKDISMYINSPGGVVTAGLSIYDTMQYVKPRIATLCLGQAASMGSLLLAAGEKGMRCALPNSRIMIHQPSGGFQGQATDIEIHAKEILNIKSRLNYIYVKHTGRELSEVVASMERDNFMSADSAQDFGIIDKVIEKRLDIDV</sequence>
<accession>Q5HBX5</accession>
<accession>Q5FD03</accession>
<feature type="chain" id="PRO_0000179556" description="ATP-dependent Clp protease proteolytic subunit">
    <location>
        <begin position="1"/>
        <end position="198"/>
    </location>
</feature>
<feature type="active site" description="Nucleophile" evidence="1">
    <location>
        <position position="98"/>
    </location>
</feature>
<feature type="active site" evidence="1">
    <location>
        <position position="123"/>
    </location>
</feature>
<protein>
    <recommendedName>
        <fullName evidence="1">ATP-dependent Clp protease proteolytic subunit</fullName>
        <ecNumber evidence="1">3.4.21.92</ecNumber>
    </recommendedName>
    <alternativeName>
        <fullName evidence="1">Endopeptidase Clp</fullName>
    </alternativeName>
</protein>
<comment type="function">
    <text evidence="1">Cleaves peptides in various proteins in a process that requires ATP hydrolysis. Has a chymotrypsin-like activity. Plays a major role in the degradation of misfolded proteins.</text>
</comment>
<comment type="catalytic activity">
    <reaction evidence="1">
        <text>Hydrolysis of proteins to small peptides in the presence of ATP and magnesium. alpha-casein is the usual test substrate. In the absence of ATP, only oligopeptides shorter than five residues are hydrolyzed (such as succinyl-Leu-Tyr-|-NHMec, and Leu-Tyr-Leu-|-Tyr-Trp, in which cleavage of the -Tyr-|-Leu- and -Tyr-|-Trp bonds also occurs).</text>
        <dbReference type="EC" id="3.4.21.92"/>
    </reaction>
</comment>
<comment type="subunit">
    <text evidence="1">Fourteen ClpP subunits assemble into 2 heptameric rings which stack back to back to give a disk-like structure with a central cavity, resembling the structure of eukaryotic proteasomes.</text>
</comment>
<comment type="subcellular location">
    <subcellularLocation>
        <location evidence="1">Cytoplasm</location>
    </subcellularLocation>
</comment>
<comment type="similarity">
    <text evidence="1">Belongs to the peptidase S14 family.</text>
</comment>
<keyword id="KW-0963">Cytoplasm</keyword>
<keyword id="KW-0378">Hydrolase</keyword>
<keyword id="KW-0645">Protease</keyword>
<keyword id="KW-0720">Serine protease</keyword>
<organism>
    <name type="scientific">Ehrlichia ruminantium (strain Welgevonden)</name>
    <dbReference type="NCBI Taxonomy" id="254945"/>
    <lineage>
        <taxon>Bacteria</taxon>
        <taxon>Pseudomonadati</taxon>
        <taxon>Pseudomonadota</taxon>
        <taxon>Alphaproteobacteria</taxon>
        <taxon>Rickettsiales</taxon>
        <taxon>Anaplasmataceae</taxon>
        <taxon>Ehrlichia</taxon>
    </lineage>
</organism>
<name>CLPP_EHRRW</name>
<gene>
    <name evidence="1" type="primary">clpP</name>
    <name type="ordered locus">Erum2000</name>
    <name type="ordered locus">ERWE_CDS_02020</name>
</gene>